<reference key="1">
    <citation type="submission" date="2009-02" db="EMBL/GenBank/DDBJ databases">
        <title>Genome sequence of Bacillus cereus 03BB102.</title>
        <authorList>
            <person name="Dodson R.J."/>
            <person name="Jackson P."/>
            <person name="Munk A.C."/>
            <person name="Brettin T."/>
            <person name="Bruce D."/>
            <person name="Detter C."/>
            <person name="Tapia R."/>
            <person name="Han C."/>
            <person name="Sutton G."/>
            <person name="Sims D."/>
        </authorList>
    </citation>
    <scope>NUCLEOTIDE SEQUENCE [LARGE SCALE GENOMIC DNA]</scope>
    <source>
        <strain>03BB102</strain>
    </source>
</reference>
<sequence length="209" mass="22901">MGKLYVFDHPLIQHKITYIRDKNTGTKDFRELVDEVASLMAFEITRDLPLKDIEIETPVSKATTKVIAGKKLGLIPILRAGLGMVDGILKLIPAAKVGHVGLYRDPKTLQPVEYYVKLPTDVEERDFIVLDPMLATGGSAAEAINSLKKRGAKQIKLMCIVAAPEGVKVVQEEHPDVDIYVAALDEKLNDHGYVVPGLGDAGDRLFGTK</sequence>
<keyword id="KW-0021">Allosteric enzyme</keyword>
<keyword id="KW-0328">Glycosyltransferase</keyword>
<keyword id="KW-0342">GTP-binding</keyword>
<keyword id="KW-0460">Magnesium</keyword>
<keyword id="KW-0547">Nucleotide-binding</keyword>
<keyword id="KW-0808">Transferase</keyword>
<evidence type="ECO:0000255" key="1">
    <source>
        <dbReference type="HAMAP-Rule" id="MF_01218"/>
    </source>
</evidence>
<gene>
    <name evidence="1" type="primary">upp</name>
    <name type="ordered locus">BCA_5460</name>
</gene>
<dbReference type="EC" id="2.4.2.9" evidence="1"/>
<dbReference type="EMBL" id="CP001407">
    <property type="protein sequence ID" value="ACO28292.1"/>
    <property type="molecule type" value="Genomic_DNA"/>
</dbReference>
<dbReference type="RefSeq" id="WP_000517539.1">
    <property type="nucleotide sequence ID" value="NZ_CP009318.1"/>
</dbReference>
<dbReference type="SMR" id="C1F0N8"/>
<dbReference type="GeneID" id="93005808"/>
<dbReference type="KEGG" id="bcx:BCA_5460"/>
<dbReference type="PATRIC" id="fig|572264.18.peg.5382"/>
<dbReference type="UniPathway" id="UPA00574">
    <property type="reaction ID" value="UER00636"/>
</dbReference>
<dbReference type="Proteomes" id="UP000002210">
    <property type="component" value="Chromosome"/>
</dbReference>
<dbReference type="GO" id="GO:0005525">
    <property type="term" value="F:GTP binding"/>
    <property type="evidence" value="ECO:0007669"/>
    <property type="project" value="UniProtKB-KW"/>
</dbReference>
<dbReference type="GO" id="GO:0000287">
    <property type="term" value="F:magnesium ion binding"/>
    <property type="evidence" value="ECO:0007669"/>
    <property type="project" value="UniProtKB-UniRule"/>
</dbReference>
<dbReference type="GO" id="GO:0004845">
    <property type="term" value="F:uracil phosphoribosyltransferase activity"/>
    <property type="evidence" value="ECO:0007669"/>
    <property type="project" value="UniProtKB-UniRule"/>
</dbReference>
<dbReference type="GO" id="GO:0044206">
    <property type="term" value="P:UMP salvage"/>
    <property type="evidence" value="ECO:0007669"/>
    <property type="project" value="UniProtKB-UniRule"/>
</dbReference>
<dbReference type="GO" id="GO:0006223">
    <property type="term" value="P:uracil salvage"/>
    <property type="evidence" value="ECO:0007669"/>
    <property type="project" value="InterPro"/>
</dbReference>
<dbReference type="CDD" id="cd06223">
    <property type="entry name" value="PRTases_typeI"/>
    <property type="match status" value="1"/>
</dbReference>
<dbReference type="FunFam" id="3.40.50.2020:FF:000003">
    <property type="entry name" value="Uracil phosphoribosyltransferase"/>
    <property type="match status" value="1"/>
</dbReference>
<dbReference type="Gene3D" id="3.40.50.2020">
    <property type="match status" value="1"/>
</dbReference>
<dbReference type="HAMAP" id="MF_01218_B">
    <property type="entry name" value="Upp_B"/>
    <property type="match status" value="1"/>
</dbReference>
<dbReference type="InterPro" id="IPR000836">
    <property type="entry name" value="PRibTrfase_dom"/>
</dbReference>
<dbReference type="InterPro" id="IPR029057">
    <property type="entry name" value="PRTase-like"/>
</dbReference>
<dbReference type="InterPro" id="IPR034332">
    <property type="entry name" value="Upp_B"/>
</dbReference>
<dbReference type="InterPro" id="IPR050054">
    <property type="entry name" value="UPRTase/APRTase"/>
</dbReference>
<dbReference type="InterPro" id="IPR005765">
    <property type="entry name" value="Ura_phspho_trans"/>
</dbReference>
<dbReference type="NCBIfam" id="NF001097">
    <property type="entry name" value="PRK00129.1"/>
    <property type="match status" value="1"/>
</dbReference>
<dbReference type="NCBIfam" id="TIGR01091">
    <property type="entry name" value="upp"/>
    <property type="match status" value="1"/>
</dbReference>
<dbReference type="PANTHER" id="PTHR32315">
    <property type="entry name" value="ADENINE PHOSPHORIBOSYLTRANSFERASE"/>
    <property type="match status" value="1"/>
</dbReference>
<dbReference type="PANTHER" id="PTHR32315:SF4">
    <property type="entry name" value="URACIL PHOSPHORIBOSYLTRANSFERASE, CHLOROPLASTIC"/>
    <property type="match status" value="1"/>
</dbReference>
<dbReference type="Pfam" id="PF14681">
    <property type="entry name" value="UPRTase"/>
    <property type="match status" value="1"/>
</dbReference>
<dbReference type="SUPFAM" id="SSF53271">
    <property type="entry name" value="PRTase-like"/>
    <property type="match status" value="1"/>
</dbReference>
<comment type="function">
    <text evidence="1">Catalyzes the conversion of uracil and 5-phospho-alpha-D-ribose 1-diphosphate (PRPP) to UMP and diphosphate.</text>
</comment>
<comment type="catalytic activity">
    <reaction evidence="1">
        <text>UMP + diphosphate = 5-phospho-alpha-D-ribose 1-diphosphate + uracil</text>
        <dbReference type="Rhea" id="RHEA:13017"/>
        <dbReference type="ChEBI" id="CHEBI:17568"/>
        <dbReference type="ChEBI" id="CHEBI:33019"/>
        <dbReference type="ChEBI" id="CHEBI:57865"/>
        <dbReference type="ChEBI" id="CHEBI:58017"/>
        <dbReference type="EC" id="2.4.2.9"/>
    </reaction>
</comment>
<comment type="cofactor">
    <cofactor evidence="1">
        <name>Mg(2+)</name>
        <dbReference type="ChEBI" id="CHEBI:18420"/>
    </cofactor>
    <text evidence="1">Binds 1 Mg(2+) ion per subunit. The magnesium is bound as Mg-PRPP.</text>
</comment>
<comment type="activity regulation">
    <text evidence="1">Allosterically activated by GTP.</text>
</comment>
<comment type="pathway">
    <text evidence="1">Pyrimidine metabolism; UMP biosynthesis via salvage pathway; UMP from uracil: step 1/1.</text>
</comment>
<comment type="similarity">
    <text evidence="1">Belongs to the UPRTase family.</text>
</comment>
<feature type="chain" id="PRO_1000164809" description="Uracil phosphoribosyltransferase">
    <location>
        <begin position="1"/>
        <end position="209"/>
    </location>
</feature>
<feature type="binding site" evidence="1">
    <location>
        <position position="79"/>
    </location>
    <ligand>
        <name>5-phospho-alpha-D-ribose 1-diphosphate</name>
        <dbReference type="ChEBI" id="CHEBI:58017"/>
    </ligand>
</feature>
<feature type="binding site" evidence="1">
    <location>
        <position position="104"/>
    </location>
    <ligand>
        <name>5-phospho-alpha-D-ribose 1-diphosphate</name>
        <dbReference type="ChEBI" id="CHEBI:58017"/>
    </ligand>
</feature>
<feature type="binding site" evidence="1">
    <location>
        <begin position="131"/>
        <end position="139"/>
    </location>
    <ligand>
        <name>5-phospho-alpha-D-ribose 1-diphosphate</name>
        <dbReference type="ChEBI" id="CHEBI:58017"/>
    </ligand>
</feature>
<feature type="binding site" evidence="1">
    <location>
        <position position="194"/>
    </location>
    <ligand>
        <name>uracil</name>
        <dbReference type="ChEBI" id="CHEBI:17568"/>
    </ligand>
</feature>
<feature type="binding site" evidence="1">
    <location>
        <begin position="199"/>
        <end position="201"/>
    </location>
    <ligand>
        <name>uracil</name>
        <dbReference type="ChEBI" id="CHEBI:17568"/>
    </ligand>
</feature>
<feature type="binding site" evidence="1">
    <location>
        <position position="200"/>
    </location>
    <ligand>
        <name>5-phospho-alpha-D-ribose 1-diphosphate</name>
        <dbReference type="ChEBI" id="CHEBI:58017"/>
    </ligand>
</feature>
<accession>C1F0N8</accession>
<name>UPP_BACC3</name>
<proteinExistence type="inferred from homology"/>
<organism>
    <name type="scientific">Bacillus cereus (strain 03BB102)</name>
    <dbReference type="NCBI Taxonomy" id="572264"/>
    <lineage>
        <taxon>Bacteria</taxon>
        <taxon>Bacillati</taxon>
        <taxon>Bacillota</taxon>
        <taxon>Bacilli</taxon>
        <taxon>Bacillales</taxon>
        <taxon>Bacillaceae</taxon>
        <taxon>Bacillus</taxon>
        <taxon>Bacillus cereus group</taxon>
    </lineage>
</organism>
<protein>
    <recommendedName>
        <fullName evidence="1">Uracil phosphoribosyltransferase</fullName>
        <ecNumber evidence="1">2.4.2.9</ecNumber>
    </recommendedName>
    <alternativeName>
        <fullName evidence="1">UMP pyrophosphorylase</fullName>
    </alternativeName>
    <alternativeName>
        <fullName evidence="1">UPRTase</fullName>
    </alternativeName>
</protein>